<name>RL29_SALDC</name>
<sequence>MKAKELREKSVEELNTELLNLLREQFNLRMQAASGQLQQSHLLKQVRRDVARVKTLLTEKAGA</sequence>
<gene>
    <name evidence="1" type="primary">rpmC</name>
    <name type="ordered locus">SeD_A3799</name>
</gene>
<keyword id="KW-0687">Ribonucleoprotein</keyword>
<keyword id="KW-0689">Ribosomal protein</keyword>
<proteinExistence type="inferred from homology"/>
<protein>
    <recommendedName>
        <fullName evidence="1">Large ribosomal subunit protein uL29</fullName>
    </recommendedName>
    <alternativeName>
        <fullName evidence="2">50S ribosomal protein L29</fullName>
    </alternativeName>
</protein>
<reference key="1">
    <citation type="journal article" date="2011" name="J. Bacteriol.">
        <title>Comparative genomics of 28 Salmonella enterica isolates: evidence for CRISPR-mediated adaptive sublineage evolution.</title>
        <authorList>
            <person name="Fricke W.F."/>
            <person name="Mammel M.K."/>
            <person name="McDermott P.F."/>
            <person name="Tartera C."/>
            <person name="White D.G."/>
            <person name="Leclerc J.E."/>
            <person name="Ravel J."/>
            <person name="Cebula T.A."/>
        </authorList>
    </citation>
    <scope>NUCLEOTIDE SEQUENCE [LARGE SCALE GENOMIC DNA]</scope>
    <source>
        <strain>CT_02021853</strain>
    </source>
</reference>
<accession>B5FJK6</accession>
<evidence type="ECO:0000255" key="1">
    <source>
        <dbReference type="HAMAP-Rule" id="MF_00374"/>
    </source>
</evidence>
<evidence type="ECO:0000305" key="2"/>
<comment type="similarity">
    <text evidence="1">Belongs to the universal ribosomal protein uL29 family.</text>
</comment>
<organism>
    <name type="scientific">Salmonella dublin (strain CT_02021853)</name>
    <dbReference type="NCBI Taxonomy" id="439851"/>
    <lineage>
        <taxon>Bacteria</taxon>
        <taxon>Pseudomonadati</taxon>
        <taxon>Pseudomonadota</taxon>
        <taxon>Gammaproteobacteria</taxon>
        <taxon>Enterobacterales</taxon>
        <taxon>Enterobacteriaceae</taxon>
        <taxon>Salmonella</taxon>
    </lineage>
</organism>
<feature type="chain" id="PRO_1000121809" description="Large ribosomal subunit protein uL29">
    <location>
        <begin position="1"/>
        <end position="63"/>
    </location>
</feature>
<dbReference type="EMBL" id="CP001144">
    <property type="protein sequence ID" value="ACH73883.1"/>
    <property type="molecule type" value="Genomic_DNA"/>
</dbReference>
<dbReference type="RefSeq" id="WP_000644742.1">
    <property type="nucleotide sequence ID" value="NC_011205.1"/>
</dbReference>
<dbReference type="SMR" id="B5FJK6"/>
<dbReference type="GeneID" id="93035739"/>
<dbReference type="KEGG" id="sed:SeD_A3799"/>
<dbReference type="HOGENOM" id="CLU_158491_1_2_6"/>
<dbReference type="Proteomes" id="UP000008322">
    <property type="component" value="Chromosome"/>
</dbReference>
<dbReference type="GO" id="GO:0022625">
    <property type="term" value="C:cytosolic large ribosomal subunit"/>
    <property type="evidence" value="ECO:0007669"/>
    <property type="project" value="TreeGrafter"/>
</dbReference>
<dbReference type="GO" id="GO:0003735">
    <property type="term" value="F:structural constituent of ribosome"/>
    <property type="evidence" value="ECO:0007669"/>
    <property type="project" value="InterPro"/>
</dbReference>
<dbReference type="GO" id="GO:0006412">
    <property type="term" value="P:translation"/>
    <property type="evidence" value="ECO:0007669"/>
    <property type="project" value="UniProtKB-UniRule"/>
</dbReference>
<dbReference type="CDD" id="cd00427">
    <property type="entry name" value="Ribosomal_L29_HIP"/>
    <property type="match status" value="1"/>
</dbReference>
<dbReference type="Gene3D" id="6.10.140.1970">
    <property type="match status" value="1"/>
</dbReference>
<dbReference type="HAMAP" id="MF_00374">
    <property type="entry name" value="Ribosomal_uL29"/>
    <property type="match status" value="1"/>
</dbReference>
<dbReference type="InterPro" id="IPR050063">
    <property type="entry name" value="Ribosomal_protein_uL29"/>
</dbReference>
<dbReference type="InterPro" id="IPR001854">
    <property type="entry name" value="Ribosomal_uL29"/>
</dbReference>
<dbReference type="InterPro" id="IPR018254">
    <property type="entry name" value="Ribosomal_uL29_CS"/>
</dbReference>
<dbReference type="InterPro" id="IPR036049">
    <property type="entry name" value="Ribosomal_uL29_sf"/>
</dbReference>
<dbReference type="NCBIfam" id="TIGR00012">
    <property type="entry name" value="L29"/>
    <property type="match status" value="1"/>
</dbReference>
<dbReference type="PANTHER" id="PTHR10916">
    <property type="entry name" value="60S RIBOSOMAL PROTEIN L35/50S RIBOSOMAL PROTEIN L29"/>
    <property type="match status" value="1"/>
</dbReference>
<dbReference type="PANTHER" id="PTHR10916:SF0">
    <property type="entry name" value="LARGE RIBOSOMAL SUBUNIT PROTEIN UL29C"/>
    <property type="match status" value="1"/>
</dbReference>
<dbReference type="Pfam" id="PF00831">
    <property type="entry name" value="Ribosomal_L29"/>
    <property type="match status" value="1"/>
</dbReference>
<dbReference type="SUPFAM" id="SSF46561">
    <property type="entry name" value="Ribosomal protein L29 (L29p)"/>
    <property type="match status" value="1"/>
</dbReference>
<dbReference type="PROSITE" id="PS00579">
    <property type="entry name" value="RIBOSOMAL_L29"/>
    <property type="match status" value="1"/>
</dbReference>